<name>MIAA_RHIEC</name>
<proteinExistence type="inferred from homology"/>
<keyword id="KW-0067">ATP-binding</keyword>
<keyword id="KW-0460">Magnesium</keyword>
<keyword id="KW-0547">Nucleotide-binding</keyword>
<keyword id="KW-1185">Reference proteome</keyword>
<keyword id="KW-0808">Transferase</keyword>
<keyword id="KW-0819">tRNA processing</keyword>
<sequence>MENLLSVENAILITGPTASGKSALAVELAKRHNGAVVNADSMQVYDTLRVLTARPSEEEMQGVPHHLYGHVPAWAGYSTGAWLRDVSALLPALRAAGQLPVFVGGTGLYFKALTGGLSDMPDIPEALREELRRRLVEEGTDALYAELSDVDPAMAAGLNRQDGQRIVRALEVTKATGRSIADFQGRSGPVVIDADEARKIVVLPDRAVLHARINGRFEKMLQQGAEDEVKALLALGLPAEAPVMKAIGVSQIAAMLKGEMTRDEVLEKGAAATRQYAKRQMTWFRNQMDDSWQRLTH</sequence>
<protein>
    <recommendedName>
        <fullName evidence="1">tRNA dimethylallyltransferase</fullName>
        <ecNumber evidence="1">2.5.1.75</ecNumber>
    </recommendedName>
    <alternativeName>
        <fullName evidence="1">Dimethylallyl diphosphate:tRNA dimethylallyltransferase</fullName>
        <shortName evidence="1">DMAPP:tRNA dimethylallyltransferase</shortName>
        <shortName evidence="1">DMATase</shortName>
    </alternativeName>
    <alternativeName>
        <fullName evidence="1">Isopentenyl-diphosphate:tRNA isopentenyltransferase</fullName>
        <shortName evidence="1">IPP transferase</shortName>
        <shortName evidence="1">IPPT</shortName>
        <shortName evidence="1">IPTase</shortName>
    </alternativeName>
</protein>
<organism>
    <name type="scientific">Rhizobium etli (strain ATCC 51251 / DSM 11541 / JCM 21823 / NBRC 15573 / CFN 42)</name>
    <dbReference type="NCBI Taxonomy" id="347834"/>
    <lineage>
        <taxon>Bacteria</taxon>
        <taxon>Pseudomonadati</taxon>
        <taxon>Pseudomonadota</taxon>
        <taxon>Alphaproteobacteria</taxon>
        <taxon>Hyphomicrobiales</taxon>
        <taxon>Rhizobiaceae</taxon>
        <taxon>Rhizobium/Agrobacterium group</taxon>
        <taxon>Rhizobium</taxon>
    </lineage>
</organism>
<comment type="function">
    <text evidence="1">Catalyzes the transfer of a dimethylallyl group onto the adenine at position 37 in tRNAs that read codons beginning with uridine, leading to the formation of N6-(dimethylallyl)adenosine (i(6)A).</text>
</comment>
<comment type="catalytic activity">
    <reaction evidence="1">
        <text>adenosine(37) in tRNA + dimethylallyl diphosphate = N(6)-dimethylallyladenosine(37) in tRNA + diphosphate</text>
        <dbReference type="Rhea" id="RHEA:26482"/>
        <dbReference type="Rhea" id="RHEA-COMP:10162"/>
        <dbReference type="Rhea" id="RHEA-COMP:10375"/>
        <dbReference type="ChEBI" id="CHEBI:33019"/>
        <dbReference type="ChEBI" id="CHEBI:57623"/>
        <dbReference type="ChEBI" id="CHEBI:74411"/>
        <dbReference type="ChEBI" id="CHEBI:74415"/>
        <dbReference type="EC" id="2.5.1.75"/>
    </reaction>
</comment>
<comment type="cofactor">
    <cofactor evidence="1">
        <name>Mg(2+)</name>
        <dbReference type="ChEBI" id="CHEBI:18420"/>
    </cofactor>
</comment>
<comment type="subunit">
    <text evidence="1">Monomer.</text>
</comment>
<comment type="similarity">
    <text evidence="1">Belongs to the IPP transferase family.</text>
</comment>
<reference key="1">
    <citation type="journal article" date="2006" name="Proc. Natl. Acad. Sci. U.S.A.">
        <title>The partitioned Rhizobium etli genome: genetic and metabolic redundancy in seven interacting replicons.</title>
        <authorList>
            <person name="Gonzalez V."/>
            <person name="Santamaria R.I."/>
            <person name="Bustos P."/>
            <person name="Hernandez-Gonzalez I."/>
            <person name="Medrano-Soto A."/>
            <person name="Moreno-Hagelsieb G."/>
            <person name="Janga S.C."/>
            <person name="Ramirez M.A."/>
            <person name="Jimenez-Jacinto V."/>
            <person name="Collado-Vides J."/>
            <person name="Davila G."/>
        </authorList>
    </citation>
    <scope>NUCLEOTIDE SEQUENCE [LARGE SCALE GENOMIC DNA]</scope>
    <source>
        <strain>ATCC 51251 / DSM 11541 / JCM 21823 / NBRC 15573 / CFN 42</strain>
    </source>
</reference>
<feature type="chain" id="PRO_0000377279" description="tRNA dimethylallyltransferase">
    <location>
        <begin position="1"/>
        <end position="297"/>
    </location>
</feature>
<feature type="region of interest" description="Interaction with substrate tRNA" evidence="1">
    <location>
        <begin position="40"/>
        <end position="43"/>
    </location>
</feature>
<feature type="region of interest" description="Interaction with substrate tRNA" evidence="1">
    <location>
        <begin position="164"/>
        <end position="168"/>
    </location>
</feature>
<feature type="binding site" evidence="1">
    <location>
        <begin position="15"/>
        <end position="22"/>
    </location>
    <ligand>
        <name>ATP</name>
        <dbReference type="ChEBI" id="CHEBI:30616"/>
    </ligand>
</feature>
<feature type="binding site" evidence="1">
    <location>
        <begin position="17"/>
        <end position="22"/>
    </location>
    <ligand>
        <name>substrate</name>
    </ligand>
</feature>
<feature type="site" description="Interaction with substrate tRNA" evidence="1">
    <location>
        <position position="106"/>
    </location>
</feature>
<feature type="site" description="Interaction with substrate tRNA" evidence="1">
    <location>
        <position position="128"/>
    </location>
</feature>
<dbReference type="EC" id="2.5.1.75" evidence="1"/>
<dbReference type="EMBL" id="CP000133">
    <property type="protein sequence ID" value="ABC91562.1"/>
    <property type="molecule type" value="Genomic_DNA"/>
</dbReference>
<dbReference type="SMR" id="Q2K6H4"/>
<dbReference type="KEGG" id="ret:RHE_CH02793"/>
<dbReference type="eggNOG" id="COG0324">
    <property type="taxonomic scope" value="Bacteria"/>
</dbReference>
<dbReference type="HOGENOM" id="CLU_032616_0_1_5"/>
<dbReference type="OrthoDB" id="9776390at2"/>
<dbReference type="Proteomes" id="UP000001936">
    <property type="component" value="Chromosome"/>
</dbReference>
<dbReference type="GO" id="GO:0005524">
    <property type="term" value="F:ATP binding"/>
    <property type="evidence" value="ECO:0007669"/>
    <property type="project" value="UniProtKB-UniRule"/>
</dbReference>
<dbReference type="GO" id="GO:0052381">
    <property type="term" value="F:tRNA dimethylallyltransferase activity"/>
    <property type="evidence" value="ECO:0007669"/>
    <property type="project" value="UniProtKB-UniRule"/>
</dbReference>
<dbReference type="GO" id="GO:0006400">
    <property type="term" value="P:tRNA modification"/>
    <property type="evidence" value="ECO:0007669"/>
    <property type="project" value="TreeGrafter"/>
</dbReference>
<dbReference type="Gene3D" id="1.10.20.140">
    <property type="match status" value="1"/>
</dbReference>
<dbReference type="Gene3D" id="1.10.287.890">
    <property type="entry name" value="Crystal structure of tRNA isopentenylpyrophosphate transferase (bh2366) domain"/>
    <property type="match status" value="1"/>
</dbReference>
<dbReference type="Gene3D" id="3.40.50.300">
    <property type="entry name" value="P-loop containing nucleotide triphosphate hydrolases"/>
    <property type="match status" value="1"/>
</dbReference>
<dbReference type="HAMAP" id="MF_00185">
    <property type="entry name" value="IPP_trans"/>
    <property type="match status" value="1"/>
</dbReference>
<dbReference type="InterPro" id="IPR039657">
    <property type="entry name" value="Dimethylallyltransferase"/>
</dbReference>
<dbReference type="InterPro" id="IPR018022">
    <property type="entry name" value="IPT"/>
</dbReference>
<dbReference type="InterPro" id="IPR027417">
    <property type="entry name" value="P-loop_NTPase"/>
</dbReference>
<dbReference type="NCBIfam" id="TIGR00174">
    <property type="entry name" value="miaA"/>
    <property type="match status" value="1"/>
</dbReference>
<dbReference type="PANTHER" id="PTHR11088">
    <property type="entry name" value="TRNA DIMETHYLALLYLTRANSFERASE"/>
    <property type="match status" value="1"/>
</dbReference>
<dbReference type="PANTHER" id="PTHR11088:SF60">
    <property type="entry name" value="TRNA DIMETHYLALLYLTRANSFERASE"/>
    <property type="match status" value="1"/>
</dbReference>
<dbReference type="Pfam" id="PF01715">
    <property type="entry name" value="IPPT"/>
    <property type="match status" value="1"/>
</dbReference>
<dbReference type="SUPFAM" id="SSF52540">
    <property type="entry name" value="P-loop containing nucleoside triphosphate hydrolases"/>
    <property type="match status" value="2"/>
</dbReference>
<gene>
    <name evidence="1" type="primary">miaA</name>
    <name type="ordered locus">RHE_CH02793</name>
</gene>
<evidence type="ECO:0000255" key="1">
    <source>
        <dbReference type="HAMAP-Rule" id="MF_00185"/>
    </source>
</evidence>
<accession>Q2K6H4</accession>